<proteinExistence type="inferred from homology"/>
<dbReference type="EMBL" id="D84432">
    <property type="protein sequence ID" value="BAA12633.1"/>
    <property type="molecule type" value="Genomic_DNA"/>
</dbReference>
<dbReference type="EMBL" id="AL009126">
    <property type="protein sequence ID" value="CAB14299.1"/>
    <property type="molecule type" value="Genomic_DNA"/>
</dbReference>
<dbReference type="PIR" id="C69966">
    <property type="entry name" value="C69966"/>
</dbReference>
<dbReference type="RefSeq" id="NP_390248.1">
    <property type="nucleotide sequence ID" value="NC_000964.3"/>
</dbReference>
<dbReference type="RefSeq" id="WP_004398771.1">
    <property type="nucleotide sequence ID" value="NZ_OZ025638.1"/>
</dbReference>
<dbReference type="SMR" id="P54564"/>
<dbReference type="FunCoup" id="P54564">
    <property type="interactions" value="7"/>
</dbReference>
<dbReference type="STRING" id="224308.BSU23670"/>
<dbReference type="PaxDb" id="224308-BSU23670"/>
<dbReference type="EnsemblBacteria" id="CAB14299">
    <property type="protein sequence ID" value="CAB14299"/>
    <property type="gene ID" value="BSU_23670"/>
</dbReference>
<dbReference type="GeneID" id="938712"/>
<dbReference type="KEGG" id="bsu:BSU23670"/>
<dbReference type="PATRIC" id="fig|224308.179.peg.2580"/>
<dbReference type="eggNOG" id="COG0456">
    <property type="taxonomic scope" value="Bacteria"/>
</dbReference>
<dbReference type="eggNOG" id="COG2320">
    <property type="taxonomic scope" value="Bacteria"/>
</dbReference>
<dbReference type="InParanoid" id="P54564"/>
<dbReference type="OrthoDB" id="9799092at2"/>
<dbReference type="BioCyc" id="BSUB:BSU23670-MONOMER"/>
<dbReference type="Proteomes" id="UP000001570">
    <property type="component" value="Chromosome"/>
</dbReference>
<dbReference type="GO" id="GO:0016747">
    <property type="term" value="F:acyltransferase activity, transferring groups other than amino-acyl groups"/>
    <property type="evidence" value="ECO:0007669"/>
    <property type="project" value="InterPro"/>
</dbReference>
<dbReference type="CDD" id="cd04301">
    <property type="entry name" value="NAT_SF"/>
    <property type="match status" value="1"/>
</dbReference>
<dbReference type="Gene3D" id="3.40.630.30">
    <property type="match status" value="1"/>
</dbReference>
<dbReference type="Gene3D" id="3.30.460.10">
    <property type="entry name" value="Beta Polymerase, domain 2"/>
    <property type="match status" value="1"/>
</dbReference>
<dbReference type="InterPro" id="IPR016181">
    <property type="entry name" value="Acyl_CoA_acyltransferase"/>
</dbReference>
<dbReference type="InterPro" id="IPR000182">
    <property type="entry name" value="GNAT_dom"/>
</dbReference>
<dbReference type="InterPro" id="IPR007344">
    <property type="entry name" value="GrpB/CoaE"/>
</dbReference>
<dbReference type="InterPro" id="IPR043519">
    <property type="entry name" value="NT_sf"/>
</dbReference>
<dbReference type="PANTHER" id="PTHR34822">
    <property type="entry name" value="GRPB DOMAIN PROTEIN (AFU_ORTHOLOGUE AFUA_1G01530)"/>
    <property type="match status" value="1"/>
</dbReference>
<dbReference type="PANTHER" id="PTHR34822:SF1">
    <property type="entry name" value="GRPB FAMILY PROTEIN"/>
    <property type="match status" value="1"/>
</dbReference>
<dbReference type="Pfam" id="PF00583">
    <property type="entry name" value="Acetyltransf_1"/>
    <property type="match status" value="1"/>
</dbReference>
<dbReference type="Pfam" id="PF04229">
    <property type="entry name" value="GrpB"/>
    <property type="match status" value="1"/>
</dbReference>
<dbReference type="SUPFAM" id="SSF55729">
    <property type="entry name" value="Acyl-CoA N-acyltransferases (Nat)"/>
    <property type="match status" value="1"/>
</dbReference>
<dbReference type="SUPFAM" id="SSF81301">
    <property type="entry name" value="Nucleotidyltransferase"/>
    <property type="match status" value="1"/>
</dbReference>
<dbReference type="PROSITE" id="PS51186">
    <property type="entry name" value="GNAT"/>
    <property type="match status" value="1"/>
</dbReference>
<comment type="similarity">
    <text evidence="2">In the C-terminal section; belongs to the UPF0157 (GrpB) family.</text>
</comment>
<keyword id="KW-0012">Acyltransferase</keyword>
<keyword id="KW-1185">Reference proteome</keyword>
<keyword id="KW-0808">Transferase</keyword>
<protein>
    <recommendedName>
        <fullName>UPF0157 protein YqkA</fullName>
    </recommendedName>
</protein>
<gene>
    <name type="primary">yqkA</name>
    <name type="ordered locus">BSU23670</name>
</gene>
<accession>P54564</accession>
<organism>
    <name type="scientific">Bacillus subtilis (strain 168)</name>
    <dbReference type="NCBI Taxonomy" id="224308"/>
    <lineage>
        <taxon>Bacteria</taxon>
        <taxon>Bacillati</taxon>
        <taxon>Bacillota</taxon>
        <taxon>Bacilli</taxon>
        <taxon>Bacillales</taxon>
        <taxon>Bacillaceae</taxon>
        <taxon>Bacillus</taxon>
    </lineage>
</organism>
<sequence>MIEFLQHKEATIAREILAVQIPAYIKETEIIGFDGIPALQEKVKDIQASHERFAGYRKNGKLIGVISYEKNMHYLTICRLVVHPDGFRKGIGRALLQFVIDHNEDAEKIEVVTAENNTPAVSLYTQAGFQKAETVKAAQGLLLSVFHLYPKRKVEIILYNEKWAECFDEEKERLKLVFGPEIIAIHHIGSTSIPNMAAKPIIDMLIEVRSIEAVSQFDEQMKANGYTPKGENGIAGRRYFQKGGNKRTHHVHMYEQGNPAIERHLLFRDYLRAHPNIAKEYAVLKKQLAAQHPDSINQYIQGKDEWIKTAEENAKRWKKGRNNANGSIVCYNSENDENGGFTL</sequence>
<name>YQKA_BACSU</name>
<feature type="chain" id="PRO_0000216127" description="UPF0157 protein YqkA">
    <location>
        <begin position="1"/>
        <end position="343"/>
    </location>
</feature>
<feature type="domain" description="N-acetyltransferase" evidence="1">
    <location>
        <begin position="8"/>
        <end position="144"/>
    </location>
</feature>
<feature type="region of interest" description="UPF0157">
    <location>
        <begin position="135"/>
        <end position="343"/>
    </location>
</feature>
<reference key="1">
    <citation type="journal article" date="1996" name="Microbiology">
        <title>Systematic sequencing of the 283 kb 210 degrees-232 degrees region of the Bacillus subtilis genome containing the skin element and many sporulation genes.</title>
        <authorList>
            <person name="Mizuno M."/>
            <person name="Masuda S."/>
            <person name="Takemaru K."/>
            <person name="Hosono S."/>
            <person name="Sato T."/>
            <person name="Takeuchi M."/>
            <person name="Kobayashi Y."/>
        </authorList>
    </citation>
    <scope>NUCLEOTIDE SEQUENCE [GENOMIC DNA]</scope>
    <source>
        <strain>168 / JH642</strain>
    </source>
</reference>
<reference key="2">
    <citation type="journal article" date="1997" name="Nature">
        <title>The complete genome sequence of the Gram-positive bacterium Bacillus subtilis.</title>
        <authorList>
            <person name="Kunst F."/>
            <person name="Ogasawara N."/>
            <person name="Moszer I."/>
            <person name="Albertini A.M."/>
            <person name="Alloni G."/>
            <person name="Azevedo V."/>
            <person name="Bertero M.G."/>
            <person name="Bessieres P."/>
            <person name="Bolotin A."/>
            <person name="Borchert S."/>
            <person name="Borriss R."/>
            <person name="Boursier L."/>
            <person name="Brans A."/>
            <person name="Braun M."/>
            <person name="Brignell S.C."/>
            <person name="Bron S."/>
            <person name="Brouillet S."/>
            <person name="Bruschi C.V."/>
            <person name="Caldwell B."/>
            <person name="Capuano V."/>
            <person name="Carter N.M."/>
            <person name="Choi S.-K."/>
            <person name="Codani J.-J."/>
            <person name="Connerton I.F."/>
            <person name="Cummings N.J."/>
            <person name="Daniel R.A."/>
            <person name="Denizot F."/>
            <person name="Devine K.M."/>
            <person name="Duesterhoeft A."/>
            <person name="Ehrlich S.D."/>
            <person name="Emmerson P.T."/>
            <person name="Entian K.-D."/>
            <person name="Errington J."/>
            <person name="Fabret C."/>
            <person name="Ferrari E."/>
            <person name="Foulger D."/>
            <person name="Fritz C."/>
            <person name="Fujita M."/>
            <person name="Fujita Y."/>
            <person name="Fuma S."/>
            <person name="Galizzi A."/>
            <person name="Galleron N."/>
            <person name="Ghim S.-Y."/>
            <person name="Glaser P."/>
            <person name="Goffeau A."/>
            <person name="Golightly E.J."/>
            <person name="Grandi G."/>
            <person name="Guiseppi G."/>
            <person name="Guy B.J."/>
            <person name="Haga K."/>
            <person name="Haiech J."/>
            <person name="Harwood C.R."/>
            <person name="Henaut A."/>
            <person name="Hilbert H."/>
            <person name="Holsappel S."/>
            <person name="Hosono S."/>
            <person name="Hullo M.-F."/>
            <person name="Itaya M."/>
            <person name="Jones L.-M."/>
            <person name="Joris B."/>
            <person name="Karamata D."/>
            <person name="Kasahara Y."/>
            <person name="Klaerr-Blanchard M."/>
            <person name="Klein C."/>
            <person name="Kobayashi Y."/>
            <person name="Koetter P."/>
            <person name="Koningstein G."/>
            <person name="Krogh S."/>
            <person name="Kumano M."/>
            <person name="Kurita K."/>
            <person name="Lapidus A."/>
            <person name="Lardinois S."/>
            <person name="Lauber J."/>
            <person name="Lazarevic V."/>
            <person name="Lee S.-M."/>
            <person name="Levine A."/>
            <person name="Liu H."/>
            <person name="Masuda S."/>
            <person name="Mauel C."/>
            <person name="Medigue C."/>
            <person name="Medina N."/>
            <person name="Mellado R.P."/>
            <person name="Mizuno M."/>
            <person name="Moestl D."/>
            <person name="Nakai S."/>
            <person name="Noback M."/>
            <person name="Noone D."/>
            <person name="O'Reilly M."/>
            <person name="Ogawa K."/>
            <person name="Ogiwara A."/>
            <person name="Oudega B."/>
            <person name="Park S.-H."/>
            <person name="Parro V."/>
            <person name="Pohl T.M."/>
            <person name="Portetelle D."/>
            <person name="Porwollik S."/>
            <person name="Prescott A.M."/>
            <person name="Presecan E."/>
            <person name="Pujic P."/>
            <person name="Purnelle B."/>
            <person name="Rapoport G."/>
            <person name="Rey M."/>
            <person name="Reynolds S."/>
            <person name="Rieger M."/>
            <person name="Rivolta C."/>
            <person name="Rocha E."/>
            <person name="Roche B."/>
            <person name="Rose M."/>
            <person name="Sadaie Y."/>
            <person name="Sato T."/>
            <person name="Scanlan E."/>
            <person name="Schleich S."/>
            <person name="Schroeter R."/>
            <person name="Scoffone F."/>
            <person name="Sekiguchi J."/>
            <person name="Sekowska A."/>
            <person name="Seror S.J."/>
            <person name="Serror P."/>
            <person name="Shin B.-S."/>
            <person name="Soldo B."/>
            <person name="Sorokin A."/>
            <person name="Tacconi E."/>
            <person name="Takagi T."/>
            <person name="Takahashi H."/>
            <person name="Takemaru K."/>
            <person name="Takeuchi M."/>
            <person name="Tamakoshi A."/>
            <person name="Tanaka T."/>
            <person name="Terpstra P."/>
            <person name="Tognoni A."/>
            <person name="Tosato V."/>
            <person name="Uchiyama S."/>
            <person name="Vandenbol M."/>
            <person name="Vannier F."/>
            <person name="Vassarotti A."/>
            <person name="Viari A."/>
            <person name="Wambutt R."/>
            <person name="Wedler E."/>
            <person name="Wedler H."/>
            <person name="Weitzenegger T."/>
            <person name="Winters P."/>
            <person name="Wipat A."/>
            <person name="Yamamoto H."/>
            <person name="Yamane K."/>
            <person name="Yasumoto K."/>
            <person name="Yata K."/>
            <person name="Yoshida K."/>
            <person name="Yoshikawa H.-F."/>
            <person name="Zumstein E."/>
            <person name="Yoshikawa H."/>
            <person name="Danchin A."/>
        </authorList>
    </citation>
    <scope>NUCLEOTIDE SEQUENCE [LARGE SCALE GENOMIC DNA]</scope>
    <source>
        <strain>168</strain>
    </source>
</reference>
<evidence type="ECO:0000255" key="1">
    <source>
        <dbReference type="PROSITE-ProRule" id="PRU00532"/>
    </source>
</evidence>
<evidence type="ECO:0000305" key="2"/>